<organism>
    <name type="scientific">Staurastrum punctulatum</name>
    <name type="common">Green alga</name>
    <name type="synonym">Cosmoastrum punctulatum</name>
    <dbReference type="NCBI Taxonomy" id="102822"/>
    <lineage>
        <taxon>Eukaryota</taxon>
        <taxon>Viridiplantae</taxon>
        <taxon>Streptophyta</taxon>
        <taxon>Zygnematophyceae</taxon>
        <taxon>Zygnematophycidae</taxon>
        <taxon>Desmidiales</taxon>
        <taxon>Desmidiaceae</taxon>
        <taxon>Staurastrum</taxon>
    </lineage>
</organism>
<keyword id="KW-0150">Chloroplast</keyword>
<keyword id="KW-0240">DNA-directed RNA polymerase</keyword>
<keyword id="KW-0479">Metal-binding</keyword>
<keyword id="KW-0548">Nucleotidyltransferase</keyword>
<keyword id="KW-0934">Plastid</keyword>
<keyword id="KW-0804">Transcription</keyword>
<keyword id="KW-0808">Transferase</keyword>
<keyword id="KW-0862">Zinc</keyword>
<feature type="chain" id="PRO_0000277203" description="DNA-directed RNA polymerase subunit beta''">
    <location>
        <begin position="1"/>
        <end position="1250"/>
    </location>
</feature>
<feature type="binding site" evidence="1">
    <location>
        <position position="224"/>
    </location>
    <ligand>
        <name>Zn(2+)</name>
        <dbReference type="ChEBI" id="CHEBI:29105"/>
    </ligand>
</feature>
<feature type="binding site" evidence="1">
    <location>
        <position position="314"/>
    </location>
    <ligand>
        <name>Zn(2+)</name>
        <dbReference type="ChEBI" id="CHEBI:29105"/>
    </ligand>
</feature>
<feature type="binding site" evidence="1">
    <location>
        <position position="321"/>
    </location>
    <ligand>
        <name>Zn(2+)</name>
        <dbReference type="ChEBI" id="CHEBI:29105"/>
    </ligand>
</feature>
<feature type="binding site" evidence="1">
    <location>
        <position position="324"/>
    </location>
    <ligand>
        <name>Zn(2+)</name>
        <dbReference type="ChEBI" id="CHEBI:29105"/>
    </ligand>
</feature>
<geneLocation type="chloroplast"/>
<dbReference type="EC" id="2.7.7.6" evidence="1"/>
<dbReference type="EMBL" id="AY958085">
    <property type="protein sequence ID" value="AAX45749.1"/>
    <property type="molecule type" value="Genomic_DNA"/>
</dbReference>
<dbReference type="RefSeq" id="YP_636394.1">
    <property type="nucleotide sequence ID" value="NC_008116.1"/>
</dbReference>
<dbReference type="SMR" id="Q32RY2"/>
<dbReference type="GeneID" id="4108611"/>
<dbReference type="GO" id="GO:0009507">
    <property type="term" value="C:chloroplast"/>
    <property type="evidence" value="ECO:0007669"/>
    <property type="project" value="UniProtKB-SubCell"/>
</dbReference>
<dbReference type="GO" id="GO:0000428">
    <property type="term" value="C:DNA-directed RNA polymerase complex"/>
    <property type="evidence" value="ECO:0007669"/>
    <property type="project" value="UniProtKB-KW"/>
</dbReference>
<dbReference type="GO" id="GO:0005739">
    <property type="term" value="C:mitochondrion"/>
    <property type="evidence" value="ECO:0007669"/>
    <property type="project" value="GOC"/>
</dbReference>
<dbReference type="GO" id="GO:0003677">
    <property type="term" value="F:DNA binding"/>
    <property type="evidence" value="ECO:0007669"/>
    <property type="project" value="UniProtKB-UniRule"/>
</dbReference>
<dbReference type="GO" id="GO:0003899">
    <property type="term" value="F:DNA-directed RNA polymerase activity"/>
    <property type="evidence" value="ECO:0007669"/>
    <property type="project" value="UniProtKB-UniRule"/>
</dbReference>
<dbReference type="GO" id="GO:0008270">
    <property type="term" value="F:zinc ion binding"/>
    <property type="evidence" value="ECO:0007669"/>
    <property type="project" value="UniProtKB-UniRule"/>
</dbReference>
<dbReference type="GO" id="GO:0006351">
    <property type="term" value="P:DNA-templated transcription"/>
    <property type="evidence" value="ECO:0007669"/>
    <property type="project" value="UniProtKB-UniRule"/>
</dbReference>
<dbReference type="CDD" id="cd02655">
    <property type="entry name" value="RNAP_beta'_C"/>
    <property type="match status" value="1"/>
</dbReference>
<dbReference type="Gene3D" id="1.10.132.30">
    <property type="match status" value="1"/>
</dbReference>
<dbReference type="Gene3D" id="1.10.150.390">
    <property type="match status" value="1"/>
</dbReference>
<dbReference type="Gene3D" id="1.10.1790.20">
    <property type="match status" value="1"/>
</dbReference>
<dbReference type="Gene3D" id="1.10.274.100">
    <property type="entry name" value="RNA polymerase Rpb1, domain 3"/>
    <property type="match status" value="1"/>
</dbReference>
<dbReference type="HAMAP" id="MF_01324">
    <property type="entry name" value="RNApol_bact_RpoC2"/>
    <property type="match status" value="1"/>
</dbReference>
<dbReference type="InterPro" id="IPR012756">
    <property type="entry name" value="DNA-dir_RpoC2_beta_pp"/>
</dbReference>
<dbReference type="InterPro" id="IPR042102">
    <property type="entry name" value="RNA_pol_Rpb1_3_sf"/>
</dbReference>
<dbReference type="InterPro" id="IPR007083">
    <property type="entry name" value="RNA_pol_Rpb1_4"/>
</dbReference>
<dbReference type="InterPro" id="IPR007081">
    <property type="entry name" value="RNA_pol_Rpb1_5"/>
</dbReference>
<dbReference type="InterPro" id="IPR038120">
    <property type="entry name" value="Rpb1_funnel_sf"/>
</dbReference>
<dbReference type="NCBIfam" id="TIGR02388">
    <property type="entry name" value="rpoC2_cyan"/>
    <property type="match status" value="1"/>
</dbReference>
<dbReference type="PANTHER" id="PTHR48443">
    <property type="entry name" value="DNA-DIRECTED RNA POLYMERASE SUBUNIT BETA"/>
    <property type="match status" value="1"/>
</dbReference>
<dbReference type="PANTHER" id="PTHR48443:SF1">
    <property type="entry name" value="DNA-DIRECTED RNA POLYMERASE SUBUNIT BETA"/>
    <property type="match status" value="1"/>
</dbReference>
<dbReference type="Pfam" id="PF05000">
    <property type="entry name" value="RNA_pol_Rpb1_4"/>
    <property type="match status" value="1"/>
</dbReference>
<dbReference type="Pfam" id="PF04998">
    <property type="entry name" value="RNA_pol_Rpb1_5"/>
    <property type="match status" value="1"/>
</dbReference>
<dbReference type="SUPFAM" id="SSF64484">
    <property type="entry name" value="beta and beta-prime subunits of DNA dependent RNA-polymerase"/>
    <property type="match status" value="1"/>
</dbReference>
<proteinExistence type="inferred from homology"/>
<sequence length="1250" mass="141907">MARLTAEFGDRIYYNQVMDRGAMRQLIGRLIIYLGSNCTSQILDQLKTLGFRHATQAGISLGVDDLITTPSKTWLIRDAEYQAYTSEEQYRRGSIHAVEKLRHVVETWHTTSEYLKREMTSHFRITDPLNPVHIMSFSGARGNVSQVHQLVGMRGLMANPQGNIIDLPIQSNLREGLSLTEYIISCYGARKGVVDTAVRTADAGYLTRRLVEVVQHVVIRNPDCETNQGIRLHSIRDRKTTRDAGGNSLLSLQERLIGRVLARNVFLGKRCIAIKNQDLAPDLVNSLVNFPKALLSPGSEGGHCEILVRSPLTCKSMPRACQKCYGWDLSCGNLVEIGAAIGIVAGQSIGEPGTQLTLRTFHTGGVFTGGVAEHVRAPFNGIVHFSISSSTHKTKTIQPTRNRHGRPAWTCPEAFSVIIEDRIGKKKVLNVPQYSLLLVKNHQYVQSRQIIAEVRASIAPLKEKIEKNIYSHLQGEVFYNPIGLRASCLKQRHFLHFLCSASRMNLWIEFASIRSYLSPLVEKTSYIWIFSGRLNKFFNATLNLSFFYQTQDYIQRDLPIGIQNHVFNYSKVFLLSIYNRQRSVTFSVSRRDIRLGRKKKFTDYIPLSRISTDKIFSKHTGSIHTISEQNEWILTLSFVDQFSKKMFSSVQTPGTSKVSEKSEEQIIDFQEQLILNYPLSKTTIFLKEPSILAKNYSIAEKDSCIGLLGEFFIFLNELSIVSVRTFISTSQINLFLKKNVFSLLCITHGNTFKGKEKIFFINDSKNIYNIKNWLISVNFLIWCHFSNRILNKNQTLATIFLSNRSLRNEKDLQVKEFKIGQSICPSRDLGEKIFEPFTHSILPESGHLLSLNEGNLLIRLAKLYLIPTGGIAHTFHKQTINEGDTLVTLAYERLKASDIIQGLPKAEQLLEARVGNQVVINLYMRFEILVARIKEQLRNYIGSLTQMDLMLSQISVNRASKALEYSQLETVDQVQKVYLSQGVYISDKHFEVIVRQMSSKIAIVENTDFTAFSPKAVIRTAFPYDVLGVFFPGEILDISKAQKMNRVLYKPLPCKPVLLGITQASLNANSFLSEASFERTITVLSRSALQGRMDWLKGLKENVLLSKMIPAGTGLKQAPVLLSPNGTGTLFSNNEQNIFQKKNVTSLSKSKGQKVQIRKIFSFQKSPQRLSFLYQETSSSNIRRKIQPTVCLCKPFITKRNWLHISLKQLTEQSLNYETKKFCLQELTNNFIPRKKENIFYLKKKTIKTT</sequence>
<name>RPOC2_STAPU</name>
<gene>
    <name evidence="1" type="primary">rpoC2</name>
</gene>
<protein>
    <recommendedName>
        <fullName evidence="1">DNA-directed RNA polymerase subunit beta''</fullName>
        <ecNumber evidence="1">2.7.7.6</ecNumber>
    </recommendedName>
    <alternativeName>
        <fullName evidence="1">PEP</fullName>
    </alternativeName>
    <alternativeName>
        <fullName evidence="1">Plastid-encoded RNA polymerase subunit beta''</fullName>
        <shortName evidence="1">RNA polymerase subunit beta''</shortName>
    </alternativeName>
</protein>
<comment type="function">
    <text evidence="1">DNA-dependent RNA polymerase catalyzes the transcription of DNA into RNA using the four ribonucleoside triphosphates as substrates.</text>
</comment>
<comment type="catalytic activity">
    <reaction evidence="1">
        <text>RNA(n) + a ribonucleoside 5'-triphosphate = RNA(n+1) + diphosphate</text>
        <dbReference type="Rhea" id="RHEA:21248"/>
        <dbReference type="Rhea" id="RHEA-COMP:14527"/>
        <dbReference type="Rhea" id="RHEA-COMP:17342"/>
        <dbReference type="ChEBI" id="CHEBI:33019"/>
        <dbReference type="ChEBI" id="CHEBI:61557"/>
        <dbReference type="ChEBI" id="CHEBI:140395"/>
        <dbReference type="EC" id="2.7.7.6"/>
    </reaction>
</comment>
<comment type="cofactor">
    <cofactor evidence="1">
        <name>Zn(2+)</name>
        <dbReference type="ChEBI" id="CHEBI:29105"/>
    </cofactor>
    <text evidence="1">Binds 1 Zn(2+) ion per subunit.</text>
</comment>
<comment type="subunit">
    <text evidence="1">In plastids the minimal PEP RNA polymerase catalytic core is composed of four subunits: alpha, beta, beta', and beta''. When a (nuclear-encoded) sigma factor is associated with the core the holoenzyme is formed, which can initiate transcription.</text>
</comment>
<comment type="subcellular location">
    <subcellularLocation>
        <location evidence="1">Plastid</location>
        <location evidence="1">Chloroplast</location>
    </subcellularLocation>
</comment>
<comment type="similarity">
    <text evidence="1">Belongs to the RNA polymerase beta' chain family. RpoC2 subfamily.</text>
</comment>
<accession>Q32RY2</accession>
<reference key="1">
    <citation type="journal article" date="2005" name="BMC Biol.">
        <title>The complete chloroplast DNA sequences of the charophycean green algae Staurastrum and Zygnema reveal that the chloroplast genome underwent extensive changes during the evolution of the Zygnematales.</title>
        <authorList>
            <person name="Turmel M."/>
            <person name="Otis C."/>
            <person name="Lemieux C."/>
        </authorList>
    </citation>
    <scope>NUCLEOTIDE SEQUENCE [LARGE SCALE GENOMIC DNA]</scope>
</reference>
<evidence type="ECO:0000255" key="1">
    <source>
        <dbReference type="HAMAP-Rule" id="MF_01324"/>
    </source>
</evidence>